<name>BBHA2_BUNCN</name>
<protein>
    <recommendedName>
        <fullName evidence="4">U-actitoxin-Bcg2a</fullName>
        <shortName evidence="4">U-AITX-Bcg2a</shortName>
    </recommendedName>
    <alternativeName>
        <fullName evidence="5">AnmTX BC 9a-3</fullName>
    </alternativeName>
    <alternativeName>
        <fullName evidence="3">Bcg III 21.75</fullName>
        <shortName evidence="3">Bcg 21.75</shortName>
    </alternativeName>
</protein>
<organism>
    <name type="scientific">Bunodosoma cangicum</name>
    <name type="common">Sea anemone</name>
    <dbReference type="NCBI Taxonomy" id="138296"/>
    <lineage>
        <taxon>Eukaryota</taxon>
        <taxon>Metazoa</taxon>
        <taxon>Cnidaria</taxon>
        <taxon>Anthozoa</taxon>
        <taxon>Hexacorallia</taxon>
        <taxon>Actiniaria</taxon>
        <taxon>Actiniidae</taxon>
        <taxon>Bunodosoma</taxon>
    </lineage>
</organism>
<keyword id="KW-0903">Direct protein sequencing</keyword>
<keyword id="KW-1015">Disulfide bond</keyword>
<keyword id="KW-0872">Ion channel impairing toxin</keyword>
<keyword id="KW-0166">Nematocyst</keyword>
<keyword id="KW-0632">Potassium channel impairing toxin</keyword>
<keyword id="KW-0964">Secreted</keyword>
<keyword id="KW-0800">Toxin</keyword>
<keyword id="KW-1220">Voltage-gated potassium channel impairing toxin</keyword>
<evidence type="ECO:0000250" key="1">
    <source>
        <dbReference type="UniProtKB" id="P86467"/>
    </source>
</evidence>
<evidence type="ECO:0000269" key="2">
    <source>
    </source>
</evidence>
<evidence type="ECO:0000303" key="3">
    <source>
    </source>
</evidence>
<evidence type="ECO:0000303" key="4">
    <source>
    </source>
</evidence>
<evidence type="ECO:0000303" key="5">
    <source>
    </source>
</evidence>
<evidence type="ECO:0000305" key="6"/>
<evidence type="ECO:0000305" key="7">
    <source>
    </source>
</evidence>
<proteinExistence type="evidence at protein level"/>
<accession>P86465</accession>
<comment type="function">
    <text evidence="1">Possible voltage-gated potassium channel (Kv) blocker.</text>
</comment>
<comment type="subcellular location">
    <subcellularLocation>
        <location evidence="6">Secreted</location>
    </subcellularLocation>
    <subcellularLocation>
        <location evidence="6">Nematocyst</location>
    </subcellularLocation>
</comment>
<comment type="mass spectrometry"/>
<comment type="similarity">
    <text evidence="7">Belongs to the sea anemone BBH family.</text>
</comment>
<feature type="peptide" id="PRO_0000392954" description="U-actitoxin-Bcg2a" evidence="2">
    <location>
        <begin position="1"/>
        <end position="30"/>
    </location>
</feature>
<feature type="disulfide bond" evidence="6">
    <location>
        <begin position="7"/>
        <end position="27"/>
    </location>
</feature>
<dbReference type="SMR" id="P86465"/>
<dbReference type="GO" id="GO:0005576">
    <property type="term" value="C:extracellular region"/>
    <property type="evidence" value="ECO:0007669"/>
    <property type="project" value="UniProtKB-SubCell"/>
</dbReference>
<dbReference type="GO" id="GO:0042151">
    <property type="term" value="C:nematocyst"/>
    <property type="evidence" value="ECO:0007669"/>
    <property type="project" value="UniProtKB-SubCell"/>
</dbReference>
<dbReference type="GO" id="GO:0015459">
    <property type="term" value="F:potassium channel regulator activity"/>
    <property type="evidence" value="ECO:0007669"/>
    <property type="project" value="UniProtKB-KW"/>
</dbReference>
<dbReference type="GO" id="GO:0090729">
    <property type="term" value="F:toxin activity"/>
    <property type="evidence" value="ECO:0007669"/>
    <property type="project" value="UniProtKB-KW"/>
</dbReference>
<sequence>NIVDVPCRDDYYRDSSGNGVYDQLGGCGAA</sequence>
<reference key="1">
    <citation type="journal article" date="2008" name="Comp. Biochem. Physiol.">
        <title>Proteomics of the neurotoxic fraction from the sea anemone Bunodosoma cangicum venom: novel peptides belonging to new classes of toxins.</title>
        <authorList>
            <person name="Zaharenko A.J."/>
            <person name="Ferreira W.A. Jr."/>
            <person name="Oliveira J.S."/>
            <person name="Richardson M."/>
            <person name="Pimenta D.C."/>
            <person name="Konno K."/>
            <person name="Portaro F.C."/>
            <person name="de Freitas J.C."/>
        </authorList>
    </citation>
    <scope>PROTEIN SEQUENCE</scope>
    <scope>MASS SPECTROMETRY</scope>
</reference>
<reference key="2">
    <citation type="journal article" date="2012" name="Toxicon">
        <title>Development of a rational nomenclature for naming peptide and protein toxins from sea anemones.</title>
        <authorList>
            <person name="Oliveira J.S."/>
            <person name="Fuentes-Silva D."/>
            <person name="King G.F."/>
        </authorList>
    </citation>
    <scope>NOMENCLATURE</scope>
</reference>
<reference key="3">
    <citation type="journal article" date="2013" name="J. Biol. Chem.">
        <title>Sea anemone peptide with uncommon beta-hairpin structure inhibits acid-sensing ion channel 3 (ASIC3) and reveals analgesic activity.</title>
        <authorList>
            <person name="Osmakov D.I."/>
            <person name="Kozlov S.A."/>
            <person name="Andreev Y.A."/>
            <person name="Koshelev S.G."/>
            <person name="Sanamyan N.P."/>
            <person name="Sanamyan K.E."/>
            <person name="Dyachenko I.A."/>
            <person name="Bondarenko D.A."/>
            <person name="Murashev A.N."/>
            <person name="Mineev K.S."/>
            <person name="Arseniev A.S."/>
            <person name="Grishin E.V."/>
        </authorList>
    </citation>
    <scope>NOMENCLATURE</scope>
</reference>